<proteinExistence type="inferred from homology"/>
<keyword id="KW-0131">Cell cycle</keyword>
<keyword id="KW-0132">Cell division</keyword>
<protein>
    <recommendedName>
        <fullName evidence="1">Cell division topological specificity factor</fullName>
    </recommendedName>
</protein>
<sequence length="111" mass="12678">MMTLRDLINKLLGRETASANTARERLQLVLAHDRVDMSSLTTDLLDKMRKEILDVVAKYVEIDFEEVAVSLETEDRMTALVANLPIKRTISGEIKFKKNDKTDQADKDIKK</sequence>
<accession>Q31CK8</accession>
<dbReference type="EMBL" id="CP000111">
    <property type="protein sequence ID" value="ABB49387.1"/>
    <property type="molecule type" value="Genomic_DNA"/>
</dbReference>
<dbReference type="RefSeq" id="WP_011375887.1">
    <property type="nucleotide sequence ID" value="NC_007577.1"/>
</dbReference>
<dbReference type="SMR" id="Q31CK8"/>
<dbReference type="STRING" id="74546.PMT9312_0326"/>
<dbReference type="KEGG" id="pmi:PMT9312_0326"/>
<dbReference type="eggNOG" id="COG0851">
    <property type="taxonomic scope" value="Bacteria"/>
</dbReference>
<dbReference type="HOGENOM" id="CLU_137929_1_1_3"/>
<dbReference type="Proteomes" id="UP000002715">
    <property type="component" value="Chromosome"/>
</dbReference>
<dbReference type="GO" id="GO:0051301">
    <property type="term" value="P:cell division"/>
    <property type="evidence" value="ECO:0007669"/>
    <property type="project" value="UniProtKB-KW"/>
</dbReference>
<dbReference type="GO" id="GO:0032955">
    <property type="term" value="P:regulation of division septum assembly"/>
    <property type="evidence" value="ECO:0007669"/>
    <property type="project" value="InterPro"/>
</dbReference>
<dbReference type="Gene3D" id="3.30.1070.10">
    <property type="entry name" value="Cell division topological specificity factor MinE"/>
    <property type="match status" value="1"/>
</dbReference>
<dbReference type="HAMAP" id="MF_00262">
    <property type="entry name" value="MinE"/>
    <property type="match status" value="1"/>
</dbReference>
<dbReference type="InterPro" id="IPR005527">
    <property type="entry name" value="MinE"/>
</dbReference>
<dbReference type="InterPro" id="IPR036707">
    <property type="entry name" value="MinE_sf"/>
</dbReference>
<dbReference type="NCBIfam" id="TIGR01215">
    <property type="entry name" value="minE"/>
    <property type="match status" value="1"/>
</dbReference>
<dbReference type="NCBIfam" id="NF001422">
    <property type="entry name" value="PRK00296.1"/>
    <property type="match status" value="1"/>
</dbReference>
<dbReference type="Pfam" id="PF03776">
    <property type="entry name" value="MinE"/>
    <property type="match status" value="1"/>
</dbReference>
<dbReference type="SUPFAM" id="SSF55229">
    <property type="entry name" value="Cell division protein MinE topological specificity domain"/>
    <property type="match status" value="1"/>
</dbReference>
<evidence type="ECO:0000255" key="1">
    <source>
        <dbReference type="HAMAP-Rule" id="MF_00262"/>
    </source>
</evidence>
<organism>
    <name type="scientific">Prochlorococcus marinus (strain MIT 9312)</name>
    <dbReference type="NCBI Taxonomy" id="74546"/>
    <lineage>
        <taxon>Bacteria</taxon>
        <taxon>Bacillati</taxon>
        <taxon>Cyanobacteriota</taxon>
        <taxon>Cyanophyceae</taxon>
        <taxon>Synechococcales</taxon>
        <taxon>Prochlorococcaceae</taxon>
        <taxon>Prochlorococcus</taxon>
    </lineage>
</organism>
<name>MINE_PROM9</name>
<comment type="function">
    <text evidence="1">Prevents the cell division inhibition by proteins MinC and MinD at internal division sites while permitting inhibition at polar sites. This ensures cell division at the proper site by restricting the formation of a division septum at the midpoint of the long axis of the cell.</text>
</comment>
<comment type="similarity">
    <text evidence="1">Belongs to the MinE family.</text>
</comment>
<reference key="1">
    <citation type="journal article" date="2006" name="Science">
        <title>Genomic islands and the ecology and evolution of Prochlorococcus.</title>
        <authorList>
            <person name="Coleman M.L."/>
            <person name="Sullivan M.B."/>
            <person name="Martiny A.C."/>
            <person name="Steglich C."/>
            <person name="Barry K."/>
            <person name="Delong E.F."/>
            <person name="Chisholm S.W."/>
        </authorList>
    </citation>
    <scope>NUCLEOTIDE SEQUENCE [LARGE SCALE GENOMIC DNA]</scope>
    <source>
        <strain>MIT 9312</strain>
    </source>
</reference>
<feature type="chain" id="PRO_0000298151" description="Cell division topological specificity factor">
    <location>
        <begin position="1"/>
        <end position="111"/>
    </location>
</feature>
<gene>
    <name evidence="1" type="primary">minE</name>
    <name type="ordered locus">PMT9312_0326</name>
</gene>